<accession>D2KQB0</accession>
<accession>B2KTD6</accession>
<evidence type="ECO:0000250" key="1">
    <source>
        <dbReference type="UniProtKB" id="Q03014"/>
    </source>
</evidence>
<evidence type="ECO:0000250" key="2">
    <source>
        <dbReference type="UniProtKB" id="Q9IAV3"/>
    </source>
</evidence>
<evidence type="ECO:0000255" key="3">
    <source>
        <dbReference type="PROSITE-ProRule" id="PRU00108"/>
    </source>
</evidence>
<evidence type="ECO:0000256" key="4">
    <source>
        <dbReference type="SAM" id="MobiDB-lite"/>
    </source>
</evidence>
<evidence type="ECO:0000269" key="5">
    <source>
    </source>
</evidence>
<evidence type="ECO:0000269" key="6">
    <source>
    </source>
</evidence>
<evidence type="ECO:0000303" key="7">
    <source>
    </source>
</evidence>
<evidence type="ECO:0000305" key="8"/>
<evidence type="ECO:0000305" key="9">
    <source>
    </source>
</evidence>
<evidence type="ECO:0000312" key="10">
    <source>
        <dbReference type="EMBL" id="ABY60803.1"/>
    </source>
</evidence>
<evidence type="ECO:0000312" key="11">
    <source>
        <dbReference type="EMBL" id="ADA79643.1"/>
    </source>
</evidence>
<gene>
    <name evidence="2" type="primary">hhex</name>
    <name evidence="7" type="synonym">hex</name>
</gene>
<reference evidence="8 11" key="1">
    <citation type="journal article" date="2010" name="Dev. Biol.">
        <title>A conserved gene regulatory network subcircuit drives different developmental fates in the vegetal pole of highly divergent echinoderm embryos.</title>
        <authorList>
            <person name="McCauley B.S."/>
            <person name="Weideman E.P."/>
            <person name="Hinman V.F."/>
        </authorList>
    </citation>
    <scope>NUCLEOTIDE SEQUENCE [MRNA]</scope>
    <scope>FUNCTION</scope>
    <scope>DEVELOPMENTAL STAGE</scope>
    <source>
        <tissue evidence="6">Gastrula</tissue>
    </source>
</reference>
<reference evidence="8 10" key="2">
    <citation type="journal article" date="2008" name="Proc. Natl. Acad. Sci. U.S.A.">
        <title>Transfer of a large gene regulatory apparatus to a new developmental address in echinoid evolution.</title>
        <authorList>
            <person name="Gao F."/>
            <person name="Davidson E.H."/>
        </authorList>
    </citation>
    <scope>NUCLEOTIDE SEQUENCE [MRNA] OF 34-240</scope>
</reference>
<feature type="chain" id="PRO_0000419636" description="Hematopoietically-expressed homeobox protein HHEX homolog">
    <location>
        <begin position="1"/>
        <end position="280"/>
    </location>
</feature>
<feature type="DNA-binding region" description="Homeobox" evidence="3">
    <location>
        <begin position="165"/>
        <end position="224"/>
    </location>
</feature>
<feature type="region of interest" description="Disordered" evidence="4">
    <location>
        <begin position="1"/>
        <end position="35"/>
    </location>
</feature>
<feature type="region of interest" description="Disordered" evidence="4">
    <location>
        <begin position="221"/>
        <end position="280"/>
    </location>
</feature>
<feature type="compositionally biased region" description="Basic and acidic residues" evidence="4">
    <location>
        <begin position="232"/>
        <end position="252"/>
    </location>
</feature>
<organism>
    <name type="scientific">Patiria miniata</name>
    <name type="common">Bat star</name>
    <name type="synonym">Asterina miniata</name>
    <dbReference type="NCBI Taxonomy" id="46514"/>
    <lineage>
        <taxon>Eukaryota</taxon>
        <taxon>Metazoa</taxon>
        <taxon>Echinodermata</taxon>
        <taxon>Eleutherozoa</taxon>
        <taxon>Asterozoa</taxon>
        <taxon>Asteroidea</taxon>
        <taxon>Valvatacea</taxon>
        <taxon>Valvatida</taxon>
        <taxon>Asterinidae</taxon>
        <taxon>Patiria</taxon>
    </lineage>
</organism>
<protein>
    <recommendedName>
        <fullName>Hematopoietically-expressed homeobox protein HHEX homolog</fullName>
        <shortName evidence="7">AmHEX</shortName>
        <shortName evidence="1">Homeobox protein HEX</shortName>
    </recommendedName>
    <alternativeName>
        <fullName>HEX homeodomain transcription factor</fullName>
    </alternativeName>
</protein>
<sequence length="280" mass="31081">MSTLQYPGPPPPSSMNLHNPHMNHHHGLVGPGLAPLSAPNGIQSLNTLHNGSGPPSHTPFYIDNILGSRLNMTGPARPTPTLPSPTFPAHMNSAYNSYYEQAVHPGLAAPTPISYGSGAFSSPPPYPFARGDYPHGLIDRHDPYSKVPGKPFLWNPFIQRPLHKRKGGQVRFSNDQTMELEKKFESQKYLSPPERKKLAKLLQLSERQVKTWFQNRRAKWRRVKQEVPTGKGEGDENSHEKPRDLDRDDFSREQVLSNGAACAFTHGGGSEADSLEEKEA</sequence>
<comment type="function">
    <text evidence="6 7">Transcription factor that may play a central role in activating or maintaining gene expression in the vegetal pole. Part of a gene regulatory circuit with Erg and Tgif that operates early in mesoderm development.</text>
</comment>
<comment type="subcellular location">
    <subcellularLocation>
        <location evidence="9">Nucleus</location>
    </subcellularLocation>
</comment>
<comment type="developmental stage">
    <text evidence="5 6">At the blastula stage, expressed within the vegetal pole domain and throughout the cells fated to become the endomesoderm. By mid-gastrula, expressed throughout the archenteron, with some clearing evident at the tip of the mesodermal bulb. Expressed at the larvae spines.</text>
</comment>
<name>HHEX_PATMI</name>
<keyword id="KW-0217">Developmental protein</keyword>
<keyword id="KW-0238">DNA-binding</keyword>
<keyword id="KW-0371">Homeobox</keyword>
<keyword id="KW-0539">Nucleus</keyword>
<keyword id="KW-1185">Reference proteome</keyword>
<keyword id="KW-0804">Transcription</keyword>
<keyword id="KW-0805">Transcription regulation</keyword>
<dbReference type="EMBL" id="GU251972">
    <property type="protein sequence ID" value="ADA79643.1"/>
    <property type="molecule type" value="mRNA"/>
</dbReference>
<dbReference type="EMBL" id="EU196052">
    <property type="protein sequence ID" value="ABY60803.1"/>
    <property type="molecule type" value="mRNA"/>
</dbReference>
<dbReference type="SMR" id="D2KQB0"/>
<dbReference type="EnsemblMetazoa" id="XM_038214950.1">
    <property type="protein sequence ID" value="XP_038070878.1"/>
    <property type="gene ID" value="LOC119739845"/>
</dbReference>
<dbReference type="OMA" id="DYPHGLI"/>
<dbReference type="OrthoDB" id="6159439at2759"/>
<dbReference type="Proteomes" id="UP000887568">
    <property type="component" value="Unplaced"/>
</dbReference>
<dbReference type="GO" id="GO:0005634">
    <property type="term" value="C:nucleus"/>
    <property type="evidence" value="ECO:0007669"/>
    <property type="project" value="UniProtKB-SubCell"/>
</dbReference>
<dbReference type="GO" id="GO:0000981">
    <property type="term" value="F:DNA-binding transcription factor activity, RNA polymerase II-specific"/>
    <property type="evidence" value="ECO:0007669"/>
    <property type="project" value="InterPro"/>
</dbReference>
<dbReference type="GO" id="GO:0000978">
    <property type="term" value="F:RNA polymerase II cis-regulatory region sequence-specific DNA binding"/>
    <property type="evidence" value="ECO:0007669"/>
    <property type="project" value="TreeGrafter"/>
</dbReference>
<dbReference type="GO" id="GO:0030154">
    <property type="term" value="P:cell differentiation"/>
    <property type="evidence" value="ECO:0007669"/>
    <property type="project" value="TreeGrafter"/>
</dbReference>
<dbReference type="CDD" id="cd00086">
    <property type="entry name" value="homeodomain"/>
    <property type="match status" value="1"/>
</dbReference>
<dbReference type="FunFam" id="1.10.10.60:FF:000721">
    <property type="entry name" value="Hematopoietically-expressed homeobox protein HHEX"/>
    <property type="match status" value="1"/>
</dbReference>
<dbReference type="Gene3D" id="1.10.10.60">
    <property type="entry name" value="Homeodomain-like"/>
    <property type="match status" value="1"/>
</dbReference>
<dbReference type="InterPro" id="IPR001356">
    <property type="entry name" value="HD"/>
</dbReference>
<dbReference type="InterPro" id="IPR020479">
    <property type="entry name" value="HD_metazoa"/>
</dbReference>
<dbReference type="InterPro" id="IPR017970">
    <property type="entry name" value="Homeobox_CS"/>
</dbReference>
<dbReference type="InterPro" id="IPR051000">
    <property type="entry name" value="Homeobox_DNA-bind_prot"/>
</dbReference>
<dbReference type="InterPro" id="IPR009057">
    <property type="entry name" value="Homeodomain-like_sf"/>
</dbReference>
<dbReference type="PANTHER" id="PTHR24324:SF5">
    <property type="entry name" value="HEMATOPOIETICALLY-EXPRESSED HOMEOBOX PROTEIN HHEX"/>
    <property type="match status" value="1"/>
</dbReference>
<dbReference type="PANTHER" id="PTHR24324">
    <property type="entry name" value="HOMEOBOX PROTEIN HHEX"/>
    <property type="match status" value="1"/>
</dbReference>
<dbReference type="Pfam" id="PF00046">
    <property type="entry name" value="Homeodomain"/>
    <property type="match status" value="1"/>
</dbReference>
<dbReference type="PRINTS" id="PR00024">
    <property type="entry name" value="HOMEOBOX"/>
</dbReference>
<dbReference type="SMART" id="SM00389">
    <property type="entry name" value="HOX"/>
    <property type="match status" value="1"/>
</dbReference>
<dbReference type="SUPFAM" id="SSF46689">
    <property type="entry name" value="Homeodomain-like"/>
    <property type="match status" value="1"/>
</dbReference>
<dbReference type="PROSITE" id="PS00027">
    <property type="entry name" value="HOMEOBOX_1"/>
    <property type="match status" value="1"/>
</dbReference>
<dbReference type="PROSITE" id="PS50071">
    <property type="entry name" value="HOMEOBOX_2"/>
    <property type="match status" value="1"/>
</dbReference>
<proteinExistence type="evidence at transcript level"/>